<reference key="1">
    <citation type="journal article" date="2007" name="J. Bacteriol.">
        <title>The complete genome sequence of Bacillus thuringiensis Al Hakam.</title>
        <authorList>
            <person name="Challacombe J.F."/>
            <person name="Altherr M.R."/>
            <person name="Xie G."/>
            <person name="Bhotika S.S."/>
            <person name="Brown N."/>
            <person name="Bruce D."/>
            <person name="Campbell C.S."/>
            <person name="Campbell M.L."/>
            <person name="Chen J."/>
            <person name="Chertkov O."/>
            <person name="Cleland C."/>
            <person name="Dimitrijevic M."/>
            <person name="Doggett N.A."/>
            <person name="Fawcett J.J."/>
            <person name="Glavina T."/>
            <person name="Goodwin L.A."/>
            <person name="Green L.D."/>
            <person name="Han C.S."/>
            <person name="Hill K.K."/>
            <person name="Hitchcock P."/>
            <person name="Jackson P.J."/>
            <person name="Keim P."/>
            <person name="Kewalramani A.R."/>
            <person name="Longmire J."/>
            <person name="Lucas S."/>
            <person name="Malfatti S."/>
            <person name="Martinez D."/>
            <person name="McMurry K."/>
            <person name="Meincke L.J."/>
            <person name="Misra M."/>
            <person name="Moseman B.L."/>
            <person name="Mundt M."/>
            <person name="Munk A.C."/>
            <person name="Okinaka R.T."/>
            <person name="Parson-Quintana B."/>
            <person name="Reilly L.P."/>
            <person name="Richardson P."/>
            <person name="Robinson D.L."/>
            <person name="Saunders E."/>
            <person name="Tapia R."/>
            <person name="Tesmer J.G."/>
            <person name="Thayer N."/>
            <person name="Thompson L.S."/>
            <person name="Tice H."/>
            <person name="Ticknor L.O."/>
            <person name="Wills P.L."/>
            <person name="Gilna P."/>
            <person name="Brettin T.S."/>
        </authorList>
    </citation>
    <scope>NUCLEOTIDE SEQUENCE [LARGE SCALE GENOMIC DNA]</scope>
    <source>
        <strain>Al Hakam</strain>
    </source>
</reference>
<organism>
    <name type="scientific">Bacillus thuringiensis (strain Al Hakam)</name>
    <dbReference type="NCBI Taxonomy" id="412694"/>
    <lineage>
        <taxon>Bacteria</taxon>
        <taxon>Bacillati</taxon>
        <taxon>Bacillota</taxon>
        <taxon>Bacilli</taxon>
        <taxon>Bacillales</taxon>
        <taxon>Bacillaceae</taxon>
        <taxon>Bacillus</taxon>
        <taxon>Bacillus cereus group</taxon>
    </lineage>
</organism>
<feature type="chain" id="PRO_0000364802" description="Ferredoxin--NADP reductase 1">
    <location>
        <begin position="1"/>
        <end position="349"/>
    </location>
</feature>
<feature type="binding site" evidence="1">
    <location>
        <position position="36"/>
    </location>
    <ligand>
        <name>FAD</name>
        <dbReference type="ChEBI" id="CHEBI:57692"/>
    </ligand>
</feature>
<feature type="binding site" evidence="1">
    <location>
        <position position="44"/>
    </location>
    <ligand>
        <name>FAD</name>
        <dbReference type="ChEBI" id="CHEBI:57692"/>
    </ligand>
</feature>
<feature type="binding site" evidence="1">
    <location>
        <position position="48"/>
    </location>
    <ligand>
        <name>FAD</name>
        <dbReference type="ChEBI" id="CHEBI:57692"/>
    </ligand>
</feature>
<feature type="binding site" evidence="1">
    <location>
        <position position="88"/>
    </location>
    <ligand>
        <name>FAD</name>
        <dbReference type="ChEBI" id="CHEBI:57692"/>
    </ligand>
</feature>
<feature type="binding site" evidence="1">
    <location>
        <position position="123"/>
    </location>
    <ligand>
        <name>FAD</name>
        <dbReference type="ChEBI" id="CHEBI:57692"/>
    </ligand>
</feature>
<feature type="binding site" evidence="1">
    <location>
        <position position="290"/>
    </location>
    <ligand>
        <name>FAD</name>
        <dbReference type="ChEBI" id="CHEBI:57692"/>
    </ligand>
</feature>
<feature type="binding site" evidence="1">
    <location>
        <position position="331"/>
    </location>
    <ligand>
        <name>FAD</name>
        <dbReference type="ChEBI" id="CHEBI:57692"/>
    </ligand>
</feature>
<keyword id="KW-0274">FAD</keyword>
<keyword id="KW-0285">Flavoprotein</keyword>
<keyword id="KW-0521">NADP</keyword>
<keyword id="KW-0560">Oxidoreductase</keyword>
<accession>A0R951</accession>
<comment type="catalytic activity">
    <reaction evidence="1">
        <text>2 reduced [2Fe-2S]-[ferredoxin] + NADP(+) + H(+) = 2 oxidized [2Fe-2S]-[ferredoxin] + NADPH</text>
        <dbReference type="Rhea" id="RHEA:20125"/>
        <dbReference type="Rhea" id="RHEA-COMP:10000"/>
        <dbReference type="Rhea" id="RHEA-COMP:10001"/>
        <dbReference type="ChEBI" id="CHEBI:15378"/>
        <dbReference type="ChEBI" id="CHEBI:33737"/>
        <dbReference type="ChEBI" id="CHEBI:33738"/>
        <dbReference type="ChEBI" id="CHEBI:57783"/>
        <dbReference type="ChEBI" id="CHEBI:58349"/>
        <dbReference type="EC" id="1.18.1.2"/>
    </reaction>
</comment>
<comment type="cofactor">
    <cofactor evidence="1">
        <name>FAD</name>
        <dbReference type="ChEBI" id="CHEBI:57692"/>
    </cofactor>
    <text evidence="1">Binds 1 FAD per subunit.</text>
</comment>
<comment type="subunit">
    <text evidence="1">Homodimer.</text>
</comment>
<comment type="similarity">
    <text evidence="1">Belongs to the ferredoxin--NADP reductase type 2 family.</text>
</comment>
<gene>
    <name type="ordered locus">BALH_0343</name>
</gene>
<evidence type="ECO:0000255" key="1">
    <source>
        <dbReference type="HAMAP-Rule" id="MF_01685"/>
    </source>
</evidence>
<sequence>MNREELFDVTVIGGGPAGLYSAFYSGLREMKTKIIEFQPQLGGKIHVYPEKMIWDIGGLLPVTGEKLIEQLVQQGLTFQPEVVLNTKIESIIRNKDGIFTLKTSTGEEHFSKTVIVATGSGILNPQKLSIEGAERFEVSNLNYTVKSLKRFKNKTVIISGGGNSAIDWANELEPIAKKVYLTYRKEELSGHEAQVKQLMNSSAECFFNTSITTLIAGDNHEAIEYVELTNHETGEVSQLAIDEVIINHGYERDITLLENSELDVAIIDNYYIAGNANSESSVDGLYAAGDILKHEGKLHLIAGAFQDAGNAVNKAKQFIQPDASEYGMVSSHNEVFKKRNRELIKQMMK</sequence>
<proteinExistence type="inferred from homology"/>
<dbReference type="EC" id="1.18.1.2" evidence="1"/>
<dbReference type="EMBL" id="CP000485">
    <property type="protein sequence ID" value="ABK83744.1"/>
    <property type="molecule type" value="Genomic_DNA"/>
</dbReference>
<dbReference type="RefSeq" id="WP_001078275.1">
    <property type="nucleotide sequence ID" value="NC_008600.1"/>
</dbReference>
<dbReference type="SMR" id="A0R951"/>
<dbReference type="KEGG" id="btl:BALH_0343"/>
<dbReference type="HOGENOM" id="CLU_031864_5_5_9"/>
<dbReference type="GO" id="GO:0004324">
    <property type="term" value="F:ferredoxin-NADP+ reductase activity"/>
    <property type="evidence" value="ECO:0007669"/>
    <property type="project" value="UniProtKB-UniRule"/>
</dbReference>
<dbReference type="GO" id="GO:0050660">
    <property type="term" value="F:flavin adenine dinucleotide binding"/>
    <property type="evidence" value="ECO:0007669"/>
    <property type="project" value="UniProtKB-UniRule"/>
</dbReference>
<dbReference type="GO" id="GO:0050661">
    <property type="term" value="F:NADP binding"/>
    <property type="evidence" value="ECO:0007669"/>
    <property type="project" value="UniProtKB-UniRule"/>
</dbReference>
<dbReference type="Gene3D" id="3.50.50.60">
    <property type="entry name" value="FAD/NAD(P)-binding domain"/>
    <property type="match status" value="2"/>
</dbReference>
<dbReference type="HAMAP" id="MF_01685">
    <property type="entry name" value="FENR2"/>
    <property type="match status" value="1"/>
</dbReference>
<dbReference type="InterPro" id="IPR036188">
    <property type="entry name" value="FAD/NAD-bd_sf"/>
</dbReference>
<dbReference type="InterPro" id="IPR023753">
    <property type="entry name" value="FAD/NAD-binding_dom"/>
</dbReference>
<dbReference type="InterPro" id="IPR022890">
    <property type="entry name" value="Fd--NADP_Rdtase_type_2"/>
</dbReference>
<dbReference type="InterPro" id="IPR050097">
    <property type="entry name" value="Ferredoxin-NADP_redctase_2"/>
</dbReference>
<dbReference type="PANTHER" id="PTHR48105">
    <property type="entry name" value="THIOREDOXIN REDUCTASE 1-RELATED-RELATED"/>
    <property type="match status" value="1"/>
</dbReference>
<dbReference type="Pfam" id="PF07992">
    <property type="entry name" value="Pyr_redox_2"/>
    <property type="match status" value="1"/>
</dbReference>
<dbReference type="PRINTS" id="PR00368">
    <property type="entry name" value="FADPNR"/>
</dbReference>
<dbReference type="PRINTS" id="PR00469">
    <property type="entry name" value="PNDRDTASEII"/>
</dbReference>
<dbReference type="SUPFAM" id="SSF51905">
    <property type="entry name" value="FAD/NAD(P)-binding domain"/>
    <property type="match status" value="1"/>
</dbReference>
<name>FENR1_BACAH</name>
<protein>
    <recommendedName>
        <fullName evidence="1">Ferredoxin--NADP reductase 1</fullName>
        <shortName evidence="1">FNR 1</shortName>
        <shortName evidence="1">Fd-NADP(+) reductase 1</shortName>
        <ecNumber evidence="1">1.18.1.2</ecNumber>
    </recommendedName>
</protein>